<dbReference type="EMBL" id="CP000251">
    <property type="protein sequence ID" value="ABC80874.1"/>
    <property type="molecule type" value="Genomic_DNA"/>
</dbReference>
<dbReference type="RefSeq" id="WP_011420157.1">
    <property type="nucleotide sequence ID" value="NC_007760.1"/>
</dbReference>
<dbReference type="SMR" id="Q2IPZ0"/>
<dbReference type="STRING" id="290397.Adeh_1099"/>
<dbReference type="KEGG" id="ade:Adeh_1099"/>
<dbReference type="eggNOG" id="COG0779">
    <property type="taxonomic scope" value="Bacteria"/>
</dbReference>
<dbReference type="HOGENOM" id="CLU_070525_2_2_7"/>
<dbReference type="OrthoDB" id="9805006at2"/>
<dbReference type="Proteomes" id="UP000001935">
    <property type="component" value="Chromosome"/>
</dbReference>
<dbReference type="GO" id="GO:0005829">
    <property type="term" value="C:cytosol"/>
    <property type="evidence" value="ECO:0007669"/>
    <property type="project" value="TreeGrafter"/>
</dbReference>
<dbReference type="GO" id="GO:0000028">
    <property type="term" value="P:ribosomal small subunit assembly"/>
    <property type="evidence" value="ECO:0007669"/>
    <property type="project" value="TreeGrafter"/>
</dbReference>
<dbReference type="GO" id="GO:0006412">
    <property type="term" value="P:translation"/>
    <property type="evidence" value="ECO:0007669"/>
    <property type="project" value="TreeGrafter"/>
</dbReference>
<dbReference type="CDD" id="cd01734">
    <property type="entry name" value="YlxS_C"/>
    <property type="match status" value="1"/>
</dbReference>
<dbReference type="FunFam" id="3.30.300.70:FF:000001">
    <property type="entry name" value="Ribosome maturation factor RimP"/>
    <property type="match status" value="1"/>
</dbReference>
<dbReference type="Gene3D" id="2.30.30.180">
    <property type="entry name" value="Ribosome maturation factor RimP, C-terminal domain"/>
    <property type="match status" value="1"/>
</dbReference>
<dbReference type="Gene3D" id="3.30.300.70">
    <property type="entry name" value="RimP-like superfamily, N-terminal"/>
    <property type="match status" value="1"/>
</dbReference>
<dbReference type="HAMAP" id="MF_01077">
    <property type="entry name" value="RimP"/>
    <property type="match status" value="1"/>
</dbReference>
<dbReference type="InterPro" id="IPR003728">
    <property type="entry name" value="Ribosome_maturation_RimP"/>
</dbReference>
<dbReference type="InterPro" id="IPR028998">
    <property type="entry name" value="RimP_C"/>
</dbReference>
<dbReference type="InterPro" id="IPR036847">
    <property type="entry name" value="RimP_C_sf"/>
</dbReference>
<dbReference type="InterPro" id="IPR028989">
    <property type="entry name" value="RimP_N"/>
</dbReference>
<dbReference type="InterPro" id="IPR035956">
    <property type="entry name" value="RimP_N_sf"/>
</dbReference>
<dbReference type="PANTHER" id="PTHR33867">
    <property type="entry name" value="RIBOSOME MATURATION FACTOR RIMP"/>
    <property type="match status" value="1"/>
</dbReference>
<dbReference type="PANTHER" id="PTHR33867:SF1">
    <property type="entry name" value="RIBOSOME MATURATION FACTOR RIMP"/>
    <property type="match status" value="1"/>
</dbReference>
<dbReference type="Pfam" id="PF17384">
    <property type="entry name" value="DUF150_C"/>
    <property type="match status" value="1"/>
</dbReference>
<dbReference type="Pfam" id="PF02576">
    <property type="entry name" value="RimP_N"/>
    <property type="match status" value="1"/>
</dbReference>
<dbReference type="SUPFAM" id="SSF74942">
    <property type="entry name" value="YhbC-like, C-terminal domain"/>
    <property type="match status" value="1"/>
</dbReference>
<dbReference type="SUPFAM" id="SSF75420">
    <property type="entry name" value="YhbC-like, N-terminal domain"/>
    <property type="match status" value="1"/>
</dbReference>
<sequence length="171" mass="18902">MTGIGEQSIAEQVRSLLEPVLERDGYELVEVEWARLAGRWTLRVFIDKAGGVGIDDCQAVSKTVEPILDVADFIEPAYDLEVSSPGLDRPLRKPRDFDRYAGQRVHVKAYGPVAGTAPGSPARKHWTGVLKGFRDGAVELDVDGALHRVPHDQIAKANLEYDVEGDLRRKD</sequence>
<comment type="function">
    <text evidence="1">Required for maturation of 30S ribosomal subunits.</text>
</comment>
<comment type="subcellular location">
    <subcellularLocation>
        <location evidence="1">Cytoplasm</location>
    </subcellularLocation>
</comment>
<comment type="similarity">
    <text evidence="1">Belongs to the RimP family.</text>
</comment>
<gene>
    <name evidence="1" type="primary">rimP</name>
    <name type="ordered locus">Adeh_1099</name>
</gene>
<evidence type="ECO:0000255" key="1">
    <source>
        <dbReference type="HAMAP-Rule" id="MF_01077"/>
    </source>
</evidence>
<name>RIMP_ANADE</name>
<feature type="chain" id="PRO_0000384600" description="Ribosome maturation factor RimP">
    <location>
        <begin position="1"/>
        <end position="171"/>
    </location>
</feature>
<accession>Q2IPZ0</accession>
<protein>
    <recommendedName>
        <fullName evidence="1">Ribosome maturation factor RimP</fullName>
    </recommendedName>
</protein>
<reference key="1">
    <citation type="submission" date="2006-01" db="EMBL/GenBank/DDBJ databases">
        <title>Complete sequence of Anaeromyxobacter dehalogenans 2CP-C.</title>
        <authorList>
            <person name="Copeland A."/>
            <person name="Lucas S."/>
            <person name="Lapidus A."/>
            <person name="Barry K."/>
            <person name="Detter J.C."/>
            <person name="Glavina T."/>
            <person name="Hammon N."/>
            <person name="Israni S."/>
            <person name="Pitluck S."/>
            <person name="Brettin T."/>
            <person name="Bruce D."/>
            <person name="Han C."/>
            <person name="Tapia R."/>
            <person name="Gilna P."/>
            <person name="Kiss H."/>
            <person name="Schmutz J."/>
            <person name="Larimer F."/>
            <person name="Land M."/>
            <person name="Kyrpides N."/>
            <person name="Anderson I."/>
            <person name="Sanford R.A."/>
            <person name="Ritalahti K.M."/>
            <person name="Thomas H.S."/>
            <person name="Kirby J.R."/>
            <person name="Zhulin I.B."/>
            <person name="Loeffler F.E."/>
            <person name="Richardson P."/>
        </authorList>
    </citation>
    <scope>NUCLEOTIDE SEQUENCE [LARGE SCALE GENOMIC DNA]</scope>
    <source>
        <strain>2CP-C</strain>
    </source>
</reference>
<proteinExistence type="inferred from homology"/>
<organism>
    <name type="scientific">Anaeromyxobacter dehalogenans (strain 2CP-C)</name>
    <dbReference type="NCBI Taxonomy" id="290397"/>
    <lineage>
        <taxon>Bacteria</taxon>
        <taxon>Pseudomonadati</taxon>
        <taxon>Myxococcota</taxon>
        <taxon>Myxococcia</taxon>
        <taxon>Myxococcales</taxon>
        <taxon>Cystobacterineae</taxon>
        <taxon>Anaeromyxobacteraceae</taxon>
        <taxon>Anaeromyxobacter</taxon>
    </lineage>
</organism>
<keyword id="KW-0963">Cytoplasm</keyword>
<keyword id="KW-1185">Reference proteome</keyword>
<keyword id="KW-0690">Ribosome biogenesis</keyword>